<sequence length="212" mass="23651">LNYQLSPSFEYQSDPWFTHVWKGVNGTPTKKRAIGFKKLAKAVKFSTKLMGQAMAKRVKATILYATETGKSQVYAKTLCEIFKHAFDAKVMSMDEYDIVHLEHEALVLVVTSTFGNGDPPENGEKFGSALMEIRHPSSNSAERKSYKVRFNSVSSYSDSRKSSSDEPEHKDNFESTGPLANVRFSAFGLGSRAYPHFCAFARAVDTLLEELG</sequence>
<name>NOS_SQUAC</name>
<reference key="1">
    <citation type="submission" date="2002-05" db="EMBL/GenBank/DDBJ databases">
        <authorList>
            <person name="Farmerie W.G."/>
            <person name="Holland K.P."/>
            <person name="Catches J.S."/>
            <person name="Morrison-Shetlar A.I."/>
            <person name="Claiborne J.B. III"/>
            <person name="Edwards S.L."/>
            <person name="Evans D.H."/>
        </authorList>
    </citation>
    <scope>NUCLEOTIDE SEQUENCE [MRNA]</scope>
    <source>
        <tissue>Gill</tissue>
    </source>
</reference>
<feature type="chain" id="PRO_0000170948" description="Nitric oxide synthase">
    <location>
        <begin position="1" status="less than"/>
        <end position="212" status="greater than"/>
    </location>
</feature>
<feature type="domain" description="Flavodoxin-like" evidence="4">
    <location>
        <begin position="60"/>
        <end position="212" status="greater than"/>
    </location>
</feature>
<feature type="region of interest" description="Calmodulin-binding" evidence="3">
    <location>
        <begin position="30"/>
        <end position="50"/>
    </location>
</feature>
<feature type="region of interest" description="Disordered" evidence="5">
    <location>
        <begin position="155"/>
        <end position="175"/>
    </location>
</feature>
<feature type="compositionally biased region" description="Basic and acidic residues" evidence="5">
    <location>
        <begin position="158"/>
        <end position="173"/>
    </location>
</feature>
<feature type="binding site" evidence="2">
    <location>
        <position position="11"/>
    </location>
    <ligand>
        <name>heme b</name>
        <dbReference type="ChEBI" id="CHEBI:60344"/>
    </ligand>
</feature>
<feature type="binding site" evidence="4">
    <location>
        <begin position="186"/>
        <end position="212" status="greater than"/>
    </location>
    <ligand>
        <name>FMN</name>
        <dbReference type="ChEBI" id="CHEBI:58210"/>
    </ligand>
</feature>
<feature type="non-terminal residue">
    <location>
        <position position="1"/>
    </location>
</feature>
<feature type="non-terminal residue">
    <location>
        <position position="212"/>
    </location>
</feature>
<comment type="function">
    <text evidence="1">Produces nitric oxide (NO) which is a messenger molecule with diverse functions throughout the body.</text>
</comment>
<comment type="catalytic activity">
    <reaction>
        <text>2 L-arginine + 3 NADPH + 4 O2 + H(+) = 2 L-citrulline + 2 nitric oxide + 3 NADP(+) + 4 H2O</text>
        <dbReference type="Rhea" id="RHEA:19897"/>
        <dbReference type="ChEBI" id="CHEBI:15377"/>
        <dbReference type="ChEBI" id="CHEBI:15378"/>
        <dbReference type="ChEBI" id="CHEBI:15379"/>
        <dbReference type="ChEBI" id="CHEBI:16480"/>
        <dbReference type="ChEBI" id="CHEBI:32682"/>
        <dbReference type="ChEBI" id="CHEBI:57743"/>
        <dbReference type="ChEBI" id="CHEBI:57783"/>
        <dbReference type="ChEBI" id="CHEBI:58349"/>
        <dbReference type="EC" id="1.14.13.39"/>
    </reaction>
</comment>
<comment type="cofactor">
    <cofactor evidence="1">
        <name>heme b</name>
        <dbReference type="ChEBI" id="CHEBI:60344"/>
    </cofactor>
</comment>
<comment type="cofactor">
    <cofactor evidence="1">
        <name>FAD</name>
        <dbReference type="ChEBI" id="CHEBI:57692"/>
    </cofactor>
    <text evidence="1">Binds 1 FAD.</text>
</comment>
<comment type="cofactor">
    <cofactor evidence="1">
        <name>FMN</name>
        <dbReference type="ChEBI" id="CHEBI:58210"/>
    </cofactor>
    <text evidence="1">Binds 1 FMN.</text>
</comment>
<comment type="similarity">
    <text evidence="6">Belongs to the NOS family.</text>
</comment>
<proteinExistence type="evidence at transcript level"/>
<keyword id="KW-0112">Calmodulin-binding</keyword>
<keyword id="KW-0274">FAD</keyword>
<keyword id="KW-0285">Flavoprotein</keyword>
<keyword id="KW-0288">FMN</keyword>
<keyword id="KW-0349">Heme</keyword>
<keyword id="KW-0408">Iron</keyword>
<keyword id="KW-0479">Metal-binding</keyword>
<keyword id="KW-0521">NADP</keyword>
<keyword id="KW-0560">Oxidoreductase</keyword>
<organism>
    <name type="scientific">Squalus acanthias</name>
    <name type="common">Spiny dogfish</name>
    <dbReference type="NCBI Taxonomy" id="7797"/>
    <lineage>
        <taxon>Eukaryota</taxon>
        <taxon>Metazoa</taxon>
        <taxon>Chordata</taxon>
        <taxon>Craniata</taxon>
        <taxon>Vertebrata</taxon>
        <taxon>Chondrichthyes</taxon>
        <taxon>Elasmobranchii</taxon>
        <taxon>Squalomorphii</taxon>
        <taxon>Squaliformes</taxon>
        <taxon>Squalidae</taxon>
        <taxon>Squalus</taxon>
    </lineage>
</organism>
<accession>Q9I9M2</accession>
<protein>
    <recommendedName>
        <fullName>Nitric oxide synthase</fullName>
        <shortName>NOS</shortName>
        <ecNumber>1.14.13.39</ecNumber>
    </recommendedName>
</protein>
<evidence type="ECO:0000250" key="1"/>
<evidence type="ECO:0000250" key="2">
    <source>
        <dbReference type="UniProtKB" id="P29474"/>
    </source>
</evidence>
<evidence type="ECO:0000255" key="3"/>
<evidence type="ECO:0000255" key="4">
    <source>
        <dbReference type="PROSITE-ProRule" id="PRU00088"/>
    </source>
</evidence>
<evidence type="ECO:0000256" key="5">
    <source>
        <dbReference type="SAM" id="MobiDB-lite"/>
    </source>
</evidence>
<evidence type="ECO:0000305" key="6"/>
<dbReference type="EC" id="1.14.13.39"/>
<dbReference type="EMBL" id="AF232227">
    <property type="protein sequence ID" value="AAF36405.2"/>
    <property type="molecule type" value="mRNA"/>
</dbReference>
<dbReference type="SMR" id="Q9I9M2"/>
<dbReference type="GO" id="GO:0005516">
    <property type="term" value="F:calmodulin binding"/>
    <property type="evidence" value="ECO:0007669"/>
    <property type="project" value="UniProtKB-KW"/>
</dbReference>
<dbReference type="GO" id="GO:0010181">
    <property type="term" value="F:FMN binding"/>
    <property type="evidence" value="ECO:0007669"/>
    <property type="project" value="InterPro"/>
</dbReference>
<dbReference type="GO" id="GO:0046872">
    <property type="term" value="F:metal ion binding"/>
    <property type="evidence" value="ECO:0007669"/>
    <property type="project" value="UniProtKB-KW"/>
</dbReference>
<dbReference type="GO" id="GO:0004517">
    <property type="term" value="F:nitric-oxide synthase activity"/>
    <property type="evidence" value="ECO:0007669"/>
    <property type="project" value="UniProtKB-EC"/>
</dbReference>
<dbReference type="FunFam" id="3.40.50.360:FF:000124">
    <property type="entry name" value="Neuronal nitric oxide synthase"/>
    <property type="match status" value="1"/>
</dbReference>
<dbReference type="Gene3D" id="3.40.50.360">
    <property type="match status" value="1"/>
</dbReference>
<dbReference type="Gene3D" id="6.10.250.410">
    <property type="match status" value="1"/>
</dbReference>
<dbReference type="InterPro" id="IPR001094">
    <property type="entry name" value="Flavdoxin-like"/>
</dbReference>
<dbReference type="InterPro" id="IPR008254">
    <property type="entry name" value="Flavodoxin/NO_synth"/>
</dbReference>
<dbReference type="InterPro" id="IPR029039">
    <property type="entry name" value="Flavoprotein-like_sf"/>
</dbReference>
<dbReference type="InterPro" id="IPR050607">
    <property type="entry name" value="NOS"/>
</dbReference>
<dbReference type="PANTHER" id="PTHR43410:SF2">
    <property type="entry name" value="NITRIC OXIDE SYNTHASE"/>
    <property type="match status" value="1"/>
</dbReference>
<dbReference type="PANTHER" id="PTHR43410">
    <property type="entry name" value="NITRIC OXIDE SYNTHASE OXYGENASE"/>
    <property type="match status" value="1"/>
</dbReference>
<dbReference type="Pfam" id="PF00258">
    <property type="entry name" value="Flavodoxin_1"/>
    <property type="match status" value="1"/>
</dbReference>
<dbReference type="PRINTS" id="PR00369">
    <property type="entry name" value="FLAVODOXIN"/>
</dbReference>
<dbReference type="SUPFAM" id="SSF52218">
    <property type="entry name" value="Flavoproteins"/>
    <property type="match status" value="1"/>
</dbReference>
<dbReference type="PROSITE" id="PS50902">
    <property type="entry name" value="FLAVODOXIN_LIKE"/>
    <property type="match status" value="1"/>
</dbReference>